<accession>P37753</accession>
<accession>P82273</accession>
<protein>
    <recommendedName>
        <fullName>Mannose-1-phosphate guanylyltransferase</fullName>
        <ecNumber>2.7.7.13</ecNumber>
    </recommendedName>
    <alternativeName>
        <fullName>GDP-mannose pyrophosphorylase</fullName>
        <shortName>GMP</shortName>
        <shortName>GMPP</shortName>
    </alternativeName>
</protein>
<dbReference type="EC" id="2.7.7.13"/>
<dbReference type="EMBL" id="L27632">
    <property type="protein sequence ID" value="AAA21139.1"/>
    <property type="molecule type" value="Genomic_DNA"/>
</dbReference>
<dbReference type="EMBL" id="L27646">
    <property type="protein sequence ID" value="AAA21137.1"/>
    <property type="molecule type" value="Genomic_DNA"/>
</dbReference>
<dbReference type="PIR" id="I41251">
    <property type="entry name" value="I41251"/>
</dbReference>
<dbReference type="PIR" id="I84556">
    <property type="entry name" value="I84556"/>
</dbReference>
<dbReference type="SMR" id="P37753"/>
<dbReference type="STRING" id="585034.ECIAI1_2104"/>
<dbReference type="UniPathway" id="UPA00126">
    <property type="reaction ID" value="UER00930"/>
</dbReference>
<dbReference type="UniPathway" id="UPA00281"/>
<dbReference type="GO" id="GO:0005525">
    <property type="term" value="F:GTP binding"/>
    <property type="evidence" value="ECO:0007669"/>
    <property type="project" value="UniProtKB-KW"/>
</dbReference>
<dbReference type="GO" id="GO:0004475">
    <property type="term" value="F:mannose-1-phosphate guanylyltransferase (GTP) activity"/>
    <property type="evidence" value="ECO:0007669"/>
    <property type="project" value="UniProtKB-EC"/>
</dbReference>
<dbReference type="GO" id="GO:0009298">
    <property type="term" value="P:GDP-mannose biosynthetic process"/>
    <property type="evidence" value="ECO:0007669"/>
    <property type="project" value="UniProtKB-UniPathway"/>
</dbReference>
<dbReference type="GO" id="GO:0009243">
    <property type="term" value="P:O antigen biosynthetic process"/>
    <property type="evidence" value="ECO:0007669"/>
    <property type="project" value="UniProtKB-UniPathway"/>
</dbReference>
<dbReference type="CDD" id="cd02213">
    <property type="entry name" value="cupin_PMI_typeII_C"/>
    <property type="match status" value="1"/>
</dbReference>
<dbReference type="CDD" id="cd02509">
    <property type="entry name" value="GDP-M1P_Guanylyltransferase"/>
    <property type="match status" value="1"/>
</dbReference>
<dbReference type="FunFam" id="3.90.550.10:FF:000046">
    <property type="entry name" value="Mannose-1-phosphate guanylyltransferase (GDP)"/>
    <property type="match status" value="1"/>
</dbReference>
<dbReference type="FunFam" id="2.60.120.10:FF:000032">
    <property type="entry name" value="Mannose-1-phosphate guanylyltransferase/mannose-6-phosphate isomerase"/>
    <property type="match status" value="1"/>
</dbReference>
<dbReference type="Gene3D" id="2.60.120.10">
    <property type="entry name" value="Jelly Rolls"/>
    <property type="match status" value="1"/>
</dbReference>
<dbReference type="Gene3D" id="3.90.550.10">
    <property type="entry name" value="Spore Coat Polysaccharide Biosynthesis Protein SpsA, Chain A"/>
    <property type="match status" value="1"/>
</dbReference>
<dbReference type="InterPro" id="IPR049577">
    <property type="entry name" value="GMPP_N"/>
</dbReference>
<dbReference type="InterPro" id="IPR006375">
    <property type="entry name" value="Man1P_GuaTrfase/Man6P_Isoase"/>
</dbReference>
<dbReference type="InterPro" id="IPR001538">
    <property type="entry name" value="Man6P_isomerase-2_C"/>
</dbReference>
<dbReference type="InterPro" id="IPR054566">
    <property type="entry name" value="ManC/GMP-like_b-helix"/>
</dbReference>
<dbReference type="InterPro" id="IPR051161">
    <property type="entry name" value="Mannose-6P_isomerase_type2"/>
</dbReference>
<dbReference type="InterPro" id="IPR005835">
    <property type="entry name" value="NTP_transferase_dom"/>
</dbReference>
<dbReference type="InterPro" id="IPR029044">
    <property type="entry name" value="Nucleotide-diphossugar_trans"/>
</dbReference>
<dbReference type="InterPro" id="IPR014710">
    <property type="entry name" value="RmlC-like_jellyroll"/>
</dbReference>
<dbReference type="InterPro" id="IPR011051">
    <property type="entry name" value="RmlC_Cupin_sf"/>
</dbReference>
<dbReference type="NCBIfam" id="TIGR01479">
    <property type="entry name" value="GMP_PMI"/>
    <property type="match status" value="1"/>
</dbReference>
<dbReference type="PANTHER" id="PTHR46390">
    <property type="entry name" value="MANNOSE-1-PHOSPHATE GUANYLYLTRANSFERASE"/>
    <property type="match status" value="1"/>
</dbReference>
<dbReference type="PANTHER" id="PTHR46390:SF1">
    <property type="entry name" value="MANNOSE-1-PHOSPHATE GUANYLYLTRANSFERASE"/>
    <property type="match status" value="1"/>
</dbReference>
<dbReference type="Pfam" id="PF22640">
    <property type="entry name" value="ManC_GMP_beta-helix"/>
    <property type="match status" value="1"/>
</dbReference>
<dbReference type="Pfam" id="PF01050">
    <property type="entry name" value="MannoseP_isomer"/>
    <property type="match status" value="1"/>
</dbReference>
<dbReference type="Pfam" id="PF00483">
    <property type="entry name" value="NTP_transferase"/>
    <property type="match status" value="1"/>
</dbReference>
<dbReference type="SUPFAM" id="SSF53448">
    <property type="entry name" value="Nucleotide-diphospho-sugar transferases"/>
    <property type="match status" value="1"/>
</dbReference>
<dbReference type="SUPFAM" id="SSF51182">
    <property type="entry name" value="RmlC-like cupins"/>
    <property type="match status" value="1"/>
</dbReference>
<proteinExistence type="inferred from homology"/>
<evidence type="ECO:0000305" key="1"/>
<gene>
    <name type="primary">manC</name>
    <name type="synonym">rfbM</name>
    <name type="synonym">rfbM1</name>
</gene>
<sequence length="471" mass="52628">MLLPVIMAGGTGSRLWPMSRELYPKQFLRLFGQNSMLQETITRLSGLEVHEPMVICNEEHRFLVAEQLRQLNKLSSNIILEPVGRNTAPAIALAALQATRHGDDPLMLVLAADHIINNQPVFHDAIRVAEQYADEGHLVTFGIVPNAPETGYGYIQRGVAVTDSAHTPYQVARFVEKPDRERAGAYLASGEYYWNSGMFMFRAKKYLSELAKFRPDILEACQAAVNAADNGSDFISIPHDIFCECPDESVDYAVMEKTADAVVVGLDADWSDVGSWSALWEVSPKDGQGNVLSGDAWVHNSENCYINSDEKLVAAIGVENLVIVSTKDAVLVMNRERSQDVKKAVEFLKQNQRTEYKRHREIYRPWGRCDVVVQTPRFNVNRITVKPGGAFSMQMHHHRAEHWVILAGTGQVTVNGKQFLLSENQSTFIPIGAEHCLENPGCIPLEVLEIQSGSYLGEDDIIRIKDQYGRC</sequence>
<keyword id="KW-0342">GTP-binding</keyword>
<keyword id="KW-0448">Lipopolysaccharide biosynthesis</keyword>
<keyword id="KW-0547">Nucleotide-binding</keyword>
<keyword id="KW-0548">Nucleotidyltransferase</keyword>
<keyword id="KW-0808">Transferase</keyword>
<feature type="chain" id="PRO_0000194259" description="Mannose-1-phosphate guanylyltransferase">
    <location>
        <begin position="1"/>
        <end position="471"/>
    </location>
</feature>
<feature type="sequence variant">
    <original>V</original>
    <variation>L</variation>
    <location>
        <position position="161"/>
    </location>
</feature>
<name>MANC9_ECOLX</name>
<comment type="function">
    <text>Involved in GDP-mannose biosynthesis which serves as the activated sugar nucleotide precursor for mannose residues in cell surface polysaccharides. This enzyme participates in synthesis of the LPS O9 antigen.</text>
</comment>
<comment type="catalytic activity">
    <reaction>
        <text>alpha-D-mannose 1-phosphate + GTP + H(+) = GDP-alpha-D-mannose + diphosphate</text>
        <dbReference type="Rhea" id="RHEA:15229"/>
        <dbReference type="ChEBI" id="CHEBI:15378"/>
        <dbReference type="ChEBI" id="CHEBI:33019"/>
        <dbReference type="ChEBI" id="CHEBI:37565"/>
        <dbReference type="ChEBI" id="CHEBI:57527"/>
        <dbReference type="ChEBI" id="CHEBI:58409"/>
        <dbReference type="EC" id="2.7.7.13"/>
    </reaction>
</comment>
<comment type="pathway">
    <text>Nucleotide-sugar biosynthesis; GDP-alpha-D-mannose biosynthesis; GDP-alpha-D-mannose from alpha-D-mannose 1-phosphate (GTP route): step 1/1.</text>
</comment>
<comment type="pathway">
    <text>Bacterial outer membrane biogenesis; LPS O-antigen biosynthesis.</text>
</comment>
<comment type="miscellaneous">
    <text>There are two duplicated genes for manB and manC in this E.coli strain.</text>
</comment>
<comment type="similarity">
    <text evidence="1">Belongs to the mannose-6-phosphate isomerase type 2 family.</text>
</comment>
<organism>
    <name type="scientific">Escherichia coli</name>
    <dbReference type="NCBI Taxonomy" id="562"/>
    <lineage>
        <taxon>Bacteria</taxon>
        <taxon>Pseudomonadati</taxon>
        <taxon>Pseudomonadota</taxon>
        <taxon>Gammaproteobacteria</taxon>
        <taxon>Enterobacterales</taxon>
        <taxon>Enterobacteriaceae</taxon>
        <taxon>Escherichia</taxon>
    </lineage>
</organism>
<reference key="1">
    <citation type="journal article" date="1994" name="J. Bacteriol.">
        <title>Cloning and analysis of duplicated rfbM and rfbK genes involved in the formation of GDP-mannose in Escherichia coli O9:K30 and participation of rfb genes in the synthesis of the group I K30 capsular polysaccharide.</title>
        <authorList>
            <person name="Jayaratne P."/>
            <person name="Bronner D."/>
            <person name="Maclachlan R.P."/>
            <person name="Dodgson C."/>
            <person name="Kido N."/>
            <person name="Whitfield C."/>
        </authorList>
    </citation>
    <scope>NUCLEOTIDE SEQUENCE [GENOMIC DNA]</scope>
    <source>
        <strain>O9a:K30:H12 / E69</strain>
    </source>
</reference>
<reference key="2">
    <citation type="journal article" date="1996" name="Trends Microbiol.">
        <title>Bacterial polysaccharide synthesis and gene nomenclature.</title>
        <authorList>
            <person name="Reeves P.R."/>
            <person name="Hobbs M."/>
            <person name="Valvano M.A."/>
            <person name="Skurnik M."/>
            <person name="Whitfield C."/>
            <person name="Coplin D."/>
            <person name="Kido N."/>
            <person name="Klena J."/>
            <person name="Maskell D."/>
            <person name="Raetz C.R.H."/>
            <person name="Rick P.D."/>
        </authorList>
    </citation>
    <scope>GENE NAME</scope>
</reference>